<keyword id="KW-0004">4Fe-4S</keyword>
<keyword id="KW-0408">Iron</keyword>
<keyword id="KW-0411">Iron-sulfur</keyword>
<keyword id="KW-0414">Isoprene biosynthesis</keyword>
<keyword id="KW-0479">Metal-binding</keyword>
<keyword id="KW-0560">Oxidoreductase</keyword>
<name>ISPG_BACAC</name>
<organism>
    <name type="scientific">Bacillus anthracis (strain CDC 684 / NRRL 3495)</name>
    <dbReference type="NCBI Taxonomy" id="568206"/>
    <lineage>
        <taxon>Bacteria</taxon>
        <taxon>Bacillati</taxon>
        <taxon>Bacillota</taxon>
        <taxon>Bacilli</taxon>
        <taxon>Bacillales</taxon>
        <taxon>Bacillaceae</taxon>
        <taxon>Bacillus</taxon>
        <taxon>Bacillus cereus group</taxon>
    </lineage>
</organism>
<sequence>MNEMTHRTKTRPVKVGNLTIGGNNELIIQSMTTTKTHDVEATVAEIKRLEEAGCQVVRVAVPDERAANAIADIKKQINIPLVADIHFDYRLALKAIEGGIDKVRINPGNIGRRHKVEAVVNAAKERGIPIRIGVNAGSLERHILEKYGYPTADGMVESALHHIKILEDLDFHDIIVSMKASDVNLAIEAYEKAARAFDYPLHLGITESGTLFAGTVKSAAGLGAILNKGIGNTLRISLSADPVEEVKVARELLKSFGLASNAATLISCPTCGRIEIDLISIANEVEEYISTLQVPIKVAVLGCAVNGPGEAREADIGIAGARGEGLLFRKGQVVRKVPEEIMVEELKKEIDVIAAEMAAEREKEKETQEQ</sequence>
<feature type="chain" id="PRO_1000123432" description="4-hydroxy-3-methylbut-2-en-1-yl diphosphate synthase (flavodoxin)">
    <location>
        <begin position="1"/>
        <end position="370"/>
    </location>
</feature>
<feature type="binding site" evidence="1">
    <location>
        <position position="268"/>
    </location>
    <ligand>
        <name>[4Fe-4S] cluster</name>
        <dbReference type="ChEBI" id="CHEBI:49883"/>
    </ligand>
</feature>
<feature type="binding site" evidence="1">
    <location>
        <position position="271"/>
    </location>
    <ligand>
        <name>[4Fe-4S] cluster</name>
        <dbReference type="ChEBI" id="CHEBI:49883"/>
    </ligand>
</feature>
<feature type="binding site" evidence="1">
    <location>
        <position position="303"/>
    </location>
    <ligand>
        <name>[4Fe-4S] cluster</name>
        <dbReference type="ChEBI" id="CHEBI:49883"/>
    </ligand>
</feature>
<feature type="binding site" evidence="1">
    <location>
        <position position="310"/>
    </location>
    <ligand>
        <name>[4Fe-4S] cluster</name>
        <dbReference type="ChEBI" id="CHEBI:49883"/>
    </ligand>
</feature>
<comment type="function">
    <text evidence="1">Converts 2C-methyl-D-erythritol 2,4-cyclodiphosphate (ME-2,4cPP) into 1-hydroxy-2-methyl-2-(E)-butenyl 4-diphosphate.</text>
</comment>
<comment type="catalytic activity">
    <reaction evidence="1">
        <text>(2E)-4-hydroxy-3-methylbut-2-enyl diphosphate + oxidized [flavodoxin] + H2O + 2 H(+) = 2-C-methyl-D-erythritol 2,4-cyclic diphosphate + reduced [flavodoxin]</text>
        <dbReference type="Rhea" id="RHEA:43604"/>
        <dbReference type="Rhea" id="RHEA-COMP:10622"/>
        <dbReference type="Rhea" id="RHEA-COMP:10623"/>
        <dbReference type="ChEBI" id="CHEBI:15377"/>
        <dbReference type="ChEBI" id="CHEBI:15378"/>
        <dbReference type="ChEBI" id="CHEBI:57618"/>
        <dbReference type="ChEBI" id="CHEBI:58210"/>
        <dbReference type="ChEBI" id="CHEBI:58483"/>
        <dbReference type="ChEBI" id="CHEBI:128753"/>
        <dbReference type="EC" id="1.17.7.3"/>
    </reaction>
</comment>
<comment type="cofactor">
    <cofactor evidence="1">
        <name>[4Fe-4S] cluster</name>
        <dbReference type="ChEBI" id="CHEBI:49883"/>
    </cofactor>
    <text evidence="1">Binds 1 [4Fe-4S] cluster.</text>
</comment>
<comment type="pathway">
    <text evidence="1">Isoprenoid biosynthesis; isopentenyl diphosphate biosynthesis via DXP pathway; isopentenyl diphosphate from 1-deoxy-D-xylulose 5-phosphate: step 5/6.</text>
</comment>
<comment type="similarity">
    <text evidence="1">Belongs to the IspG family.</text>
</comment>
<evidence type="ECO:0000255" key="1">
    <source>
        <dbReference type="HAMAP-Rule" id="MF_00159"/>
    </source>
</evidence>
<gene>
    <name evidence="1" type="primary">ispG</name>
    <name type="ordered locus">BAMEG_4540</name>
</gene>
<proteinExistence type="inferred from homology"/>
<accession>C3LKV7</accession>
<dbReference type="EC" id="1.17.7.3" evidence="1"/>
<dbReference type="EMBL" id="CP001215">
    <property type="protein sequence ID" value="ACP16996.1"/>
    <property type="molecule type" value="Genomic_DNA"/>
</dbReference>
<dbReference type="SMR" id="C3LKV7"/>
<dbReference type="KEGG" id="bah:BAMEG_4540"/>
<dbReference type="HOGENOM" id="CLU_042258_0_0_9"/>
<dbReference type="UniPathway" id="UPA00056">
    <property type="reaction ID" value="UER00096"/>
</dbReference>
<dbReference type="GO" id="GO:0051539">
    <property type="term" value="F:4 iron, 4 sulfur cluster binding"/>
    <property type="evidence" value="ECO:0007669"/>
    <property type="project" value="UniProtKB-UniRule"/>
</dbReference>
<dbReference type="GO" id="GO:0046429">
    <property type="term" value="F:4-hydroxy-3-methylbut-2-en-1-yl diphosphate synthase activity (ferredoxin)"/>
    <property type="evidence" value="ECO:0007669"/>
    <property type="project" value="UniProtKB-UniRule"/>
</dbReference>
<dbReference type="GO" id="GO:0141197">
    <property type="term" value="F:4-hydroxy-3-methylbut-2-enyl-diphosphate synthase activity (flavodoxin)"/>
    <property type="evidence" value="ECO:0007669"/>
    <property type="project" value="UniProtKB-EC"/>
</dbReference>
<dbReference type="GO" id="GO:0005506">
    <property type="term" value="F:iron ion binding"/>
    <property type="evidence" value="ECO:0007669"/>
    <property type="project" value="InterPro"/>
</dbReference>
<dbReference type="GO" id="GO:0019288">
    <property type="term" value="P:isopentenyl diphosphate biosynthetic process, methylerythritol 4-phosphate pathway"/>
    <property type="evidence" value="ECO:0007669"/>
    <property type="project" value="UniProtKB-UniRule"/>
</dbReference>
<dbReference type="GO" id="GO:0016114">
    <property type="term" value="P:terpenoid biosynthetic process"/>
    <property type="evidence" value="ECO:0007669"/>
    <property type="project" value="InterPro"/>
</dbReference>
<dbReference type="FunFam" id="3.20.20.20:FF:000001">
    <property type="entry name" value="4-hydroxy-3-methylbut-2-en-1-yl diphosphate synthase (flavodoxin)"/>
    <property type="match status" value="1"/>
</dbReference>
<dbReference type="FunFam" id="3.30.413.10:FF:000005">
    <property type="entry name" value="4-hydroxy-3-methylbut-2-en-1-yl diphosphate synthase (flavodoxin)"/>
    <property type="match status" value="1"/>
</dbReference>
<dbReference type="Gene3D" id="3.20.20.20">
    <property type="entry name" value="Dihydropteroate synthase-like"/>
    <property type="match status" value="1"/>
</dbReference>
<dbReference type="Gene3D" id="3.30.413.10">
    <property type="entry name" value="Sulfite Reductase Hemoprotein, domain 1"/>
    <property type="match status" value="1"/>
</dbReference>
<dbReference type="HAMAP" id="MF_00159">
    <property type="entry name" value="IspG"/>
    <property type="match status" value="1"/>
</dbReference>
<dbReference type="InterPro" id="IPR011005">
    <property type="entry name" value="Dihydropteroate_synth-like_sf"/>
</dbReference>
<dbReference type="InterPro" id="IPR016425">
    <property type="entry name" value="IspG_bac"/>
</dbReference>
<dbReference type="InterPro" id="IPR004588">
    <property type="entry name" value="IspG_bac-typ"/>
</dbReference>
<dbReference type="InterPro" id="IPR045854">
    <property type="entry name" value="NO2/SO3_Rdtase_4Fe4S_sf"/>
</dbReference>
<dbReference type="NCBIfam" id="TIGR00612">
    <property type="entry name" value="ispG_gcpE"/>
    <property type="match status" value="1"/>
</dbReference>
<dbReference type="NCBIfam" id="NF001540">
    <property type="entry name" value="PRK00366.1"/>
    <property type="match status" value="1"/>
</dbReference>
<dbReference type="PANTHER" id="PTHR30454">
    <property type="entry name" value="4-HYDROXY-3-METHYLBUT-2-EN-1-YL DIPHOSPHATE SYNTHASE"/>
    <property type="match status" value="1"/>
</dbReference>
<dbReference type="PANTHER" id="PTHR30454:SF0">
    <property type="entry name" value="4-HYDROXY-3-METHYLBUT-2-EN-1-YL DIPHOSPHATE SYNTHASE (FERREDOXIN), CHLOROPLASTIC"/>
    <property type="match status" value="1"/>
</dbReference>
<dbReference type="Pfam" id="PF04551">
    <property type="entry name" value="GcpE"/>
    <property type="match status" value="1"/>
</dbReference>
<dbReference type="PIRSF" id="PIRSF004640">
    <property type="entry name" value="IspG"/>
    <property type="match status" value="1"/>
</dbReference>
<dbReference type="SUPFAM" id="SSF51717">
    <property type="entry name" value="Dihydropteroate synthetase-like"/>
    <property type="match status" value="1"/>
</dbReference>
<dbReference type="SUPFAM" id="SSF56014">
    <property type="entry name" value="Nitrite and sulphite reductase 4Fe-4S domain-like"/>
    <property type="match status" value="1"/>
</dbReference>
<protein>
    <recommendedName>
        <fullName evidence="1">4-hydroxy-3-methylbut-2-en-1-yl diphosphate synthase (flavodoxin)</fullName>
        <ecNumber evidence="1">1.17.7.3</ecNumber>
    </recommendedName>
    <alternativeName>
        <fullName evidence="1">1-hydroxy-2-methyl-2-(E)-butenyl 4-diphosphate synthase</fullName>
    </alternativeName>
</protein>
<reference key="1">
    <citation type="submission" date="2008-10" db="EMBL/GenBank/DDBJ databases">
        <title>Genome sequence of Bacillus anthracis str. CDC 684.</title>
        <authorList>
            <person name="Dodson R.J."/>
            <person name="Munk A.C."/>
            <person name="Brettin T."/>
            <person name="Bruce D."/>
            <person name="Detter C."/>
            <person name="Tapia R."/>
            <person name="Han C."/>
            <person name="Sutton G."/>
            <person name="Sims D."/>
        </authorList>
    </citation>
    <scope>NUCLEOTIDE SEQUENCE [LARGE SCALE GENOMIC DNA]</scope>
    <source>
        <strain>CDC 684 / NRRL 3495</strain>
    </source>
</reference>